<gene>
    <name evidence="1" type="primary">acsA</name>
    <name type="ordered locus">Psyr_3572</name>
</gene>
<organism>
    <name type="scientific">Pseudomonas syringae pv. syringae (strain B728a)</name>
    <dbReference type="NCBI Taxonomy" id="205918"/>
    <lineage>
        <taxon>Bacteria</taxon>
        <taxon>Pseudomonadati</taxon>
        <taxon>Pseudomonadota</taxon>
        <taxon>Gammaproteobacteria</taxon>
        <taxon>Pseudomonadales</taxon>
        <taxon>Pseudomonadaceae</taxon>
        <taxon>Pseudomonas</taxon>
        <taxon>Pseudomonas syringae</taxon>
    </lineage>
</organism>
<sequence>MSAASLYPVRPEVAATTLTDEATYKAMYQQSVVNPDGFWREQAQRLDWIKPFSVVKQTSFDDHRVDIKWFADGTLNVAYNCLDRHLEERGDSIAIIWEGDDPSEHREITYRELHAEVCKFANALRGQDVHRGDVVTIYMPMIPEAVVAMLACARIGAIHSVVFGGFSPEALAGRIIDCSSKVVITADEGLRGGKKTALKANVDRALTNPETSSVQKVIVCKRTGGEIEWNRHRDIWYHSLLEVASSTCAPKEMGAEESLFILYTSGSTGKPKGVLHTTAGYLLYAALTHERVFDYRPGEVYWCTADVGWVTGHSYIVYGPLANGATTLLFEGVPNYPDITRVSKIIDKHKVNILYTAPTAIRAMMAEGTKSVEGADGSSLRLLGSVGEPINPEAWAWYYNTVGKQNCPIVDTWWQTETGGILISPLPGATALKPGSATRPFFGVIPALVDNLGNLIEGAAEGNLVILDSWPGQSRSLYGDHDRFVDTYFKTFRGMYFTGDGARRDEDGYFWITGRVDDVLNVSGHRMGTAEIESAMVAHPKVAEAAVVGVPHDLKGQGIYVYVTLNGGEEPSDALRTELRNWVRKEIGPIASPDFIQWAPGLPKTRSGKIMRRILRKIATAEYDALGDISTLADPGVVQHLIDTHKTMNAA</sequence>
<evidence type="ECO:0000255" key="1">
    <source>
        <dbReference type="HAMAP-Rule" id="MF_01123"/>
    </source>
</evidence>
<protein>
    <recommendedName>
        <fullName evidence="1">Acetyl-coenzyme A synthetase</fullName>
        <shortName evidence="1">AcCoA synthetase</shortName>
        <shortName evidence="1">Acs</shortName>
        <ecNumber evidence="1">6.2.1.1</ecNumber>
    </recommendedName>
    <alternativeName>
        <fullName evidence="1">Acetate--CoA ligase</fullName>
    </alternativeName>
    <alternativeName>
        <fullName evidence="1">Acyl-activating enzyme</fullName>
    </alternativeName>
</protein>
<feature type="chain" id="PRO_1000065304" description="Acetyl-coenzyme A synthetase">
    <location>
        <begin position="1"/>
        <end position="651"/>
    </location>
</feature>
<feature type="binding site" evidence="1">
    <location>
        <begin position="191"/>
        <end position="194"/>
    </location>
    <ligand>
        <name>CoA</name>
        <dbReference type="ChEBI" id="CHEBI:57287"/>
    </ligand>
</feature>
<feature type="binding site" evidence="1">
    <location>
        <position position="311"/>
    </location>
    <ligand>
        <name>CoA</name>
        <dbReference type="ChEBI" id="CHEBI:57287"/>
    </ligand>
</feature>
<feature type="binding site" evidence="1">
    <location>
        <position position="335"/>
    </location>
    <ligand>
        <name>CoA</name>
        <dbReference type="ChEBI" id="CHEBI:57287"/>
    </ligand>
</feature>
<feature type="binding site" evidence="1">
    <location>
        <begin position="387"/>
        <end position="389"/>
    </location>
    <ligand>
        <name>ATP</name>
        <dbReference type="ChEBI" id="CHEBI:30616"/>
    </ligand>
</feature>
<feature type="binding site" evidence="1">
    <location>
        <begin position="411"/>
        <end position="416"/>
    </location>
    <ligand>
        <name>ATP</name>
        <dbReference type="ChEBI" id="CHEBI:30616"/>
    </ligand>
</feature>
<feature type="binding site" evidence="1">
    <location>
        <position position="500"/>
    </location>
    <ligand>
        <name>ATP</name>
        <dbReference type="ChEBI" id="CHEBI:30616"/>
    </ligand>
</feature>
<feature type="binding site" evidence="1">
    <location>
        <position position="515"/>
    </location>
    <ligand>
        <name>ATP</name>
        <dbReference type="ChEBI" id="CHEBI:30616"/>
    </ligand>
</feature>
<feature type="binding site" evidence="1">
    <location>
        <position position="523"/>
    </location>
    <ligand>
        <name>CoA</name>
        <dbReference type="ChEBI" id="CHEBI:57287"/>
    </ligand>
</feature>
<feature type="binding site" evidence="1">
    <location>
        <position position="526"/>
    </location>
    <ligand>
        <name>ATP</name>
        <dbReference type="ChEBI" id="CHEBI:30616"/>
    </ligand>
</feature>
<feature type="binding site" evidence="1">
    <location>
        <position position="537"/>
    </location>
    <ligand>
        <name>Mg(2+)</name>
        <dbReference type="ChEBI" id="CHEBI:18420"/>
    </ligand>
</feature>
<feature type="binding site" evidence="1">
    <location>
        <position position="539"/>
    </location>
    <ligand>
        <name>Mg(2+)</name>
        <dbReference type="ChEBI" id="CHEBI:18420"/>
    </ligand>
</feature>
<feature type="binding site" evidence="1">
    <location>
        <position position="542"/>
    </location>
    <ligand>
        <name>Mg(2+)</name>
        <dbReference type="ChEBI" id="CHEBI:18420"/>
    </ligand>
</feature>
<feature type="binding site" evidence="1">
    <location>
        <position position="584"/>
    </location>
    <ligand>
        <name>CoA</name>
        <dbReference type="ChEBI" id="CHEBI:57287"/>
    </ligand>
</feature>
<feature type="modified residue" description="N6-acetyllysine" evidence="1">
    <location>
        <position position="609"/>
    </location>
</feature>
<keyword id="KW-0007">Acetylation</keyword>
<keyword id="KW-0067">ATP-binding</keyword>
<keyword id="KW-0436">Ligase</keyword>
<keyword id="KW-0460">Magnesium</keyword>
<keyword id="KW-0479">Metal-binding</keyword>
<keyword id="KW-0547">Nucleotide-binding</keyword>
<dbReference type="EC" id="6.2.1.1" evidence="1"/>
<dbReference type="EMBL" id="CP000075">
    <property type="protein sequence ID" value="AAY38604.1"/>
    <property type="molecule type" value="Genomic_DNA"/>
</dbReference>
<dbReference type="RefSeq" id="YP_236642.1">
    <property type="nucleotide sequence ID" value="NC_007005.1"/>
</dbReference>
<dbReference type="SMR" id="Q4ZQG8"/>
<dbReference type="STRING" id="205918.Psyr_3572"/>
<dbReference type="KEGG" id="psb:Psyr_3572"/>
<dbReference type="PATRIC" id="fig|205918.7.peg.3659"/>
<dbReference type="eggNOG" id="COG0365">
    <property type="taxonomic scope" value="Bacteria"/>
</dbReference>
<dbReference type="HOGENOM" id="CLU_000022_3_6_6"/>
<dbReference type="OrthoDB" id="9803968at2"/>
<dbReference type="Proteomes" id="UP000000426">
    <property type="component" value="Chromosome"/>
</dbReference>
<dbReference type="GO" id="GO:0005829">
    <property type="term" value="C:cytosol"/>
    <property type="evidence" value="ECO:0007669"/>
    <property type="project" value="TreeGrafter"/>
</dbReference>
<dbReference type="GO" id="GO:0003987">
    <property type="term" value="F:acetate-CoA ligase activity"/>
    <property type="evidence" value="ECO:0007669"/>
    <property type="project" value="UniProtKB-UniRule"/>
</dbReference>
<dbReference type="GO" id="GO:0016208">
    <property type="term" value="F:AMP binding"/>
    <property type="evidence" value="ECO:0007669"/>
    <property type="project" value="InterPro"/>
</dbReference>
<dbReference type="GO" id="GO:0005524">
    <property type="term" value="F:ATP binding"/>
    <property type="evidence" value="ECO:0007669"/>
    <property type="project" value="UniProtKB-KW"/>
</dbReference>
<dbReference type="GO" id="GO:0046872">
    <property type="term" value="F:metal ion binding"/>
    <property type="evidence" value="ECO:0007669"/>
    <property type="project" value="UniProtKB-KW"/>
</dbReference>
<dbReference type="GO" id="GO:0019427">
    <property type="term" value="P:acetyl-CoA biosynthetic process from acetate"/>
    <property type="evidence" value="ECO:0007669"/>
    <property type="project" value="InterPro"/>
</dbReference>
<dbReference type="CDD" id="cd05966">
    <property type="entry name" value="ACS"/>
    <property type="match status" value="1"/>
</dbReference>
<dbReference type="FunFam" id="3.30.300.30:FF:000004">
    <property type="entry name" value="Acetyl-coenzyme A synthetase"/>
    <property type="match status" value="1"/>
</dbReference>
<dbReference type="FunFam" id="3.40.50.12780:FF:000001">
    <property type="entry name" value="Acetyl-coenzyme A synthetase"/>
    <property type="match status" value="1"/>
</dbReference>
<dbReference type="Gene3D" id="3.30.300.30">
    <property type="match status" value="1"/>
</dbReference>
<dbReference type="Gene3D" id="3.40.50.12780">
    <property type="entry name" value="N-terminal domain of ligase-like"/>
    <property type="match status" value="1"/>
</dbReference>
<dbReference type="HAMAP" id="MF_01123">
    <property type="entry name" value="Ac_CoA_synth"/>
    <property type="match status" value="1"/>
</dbReference>
<dbReference type="InterPro" id="IPR011904">
    <property type="entry name" value="Ac_CoA_lig"/>
</dbReference>
<dbReference type="InterPro" id="IPR032387">
    <property type="entry name" value="ACAS_N"/>
</dbReference>
<dbReference type="InterPro" id="IPR025110">
    <property type="entry name" value="AMP-bd_C"/>
</dbReference>
<dbReference type="InterPro" id="IPR045851">
    <property type="entry name" value="AMP-bd_C_sf"/>
</dbReference>
<dbReference type="InterPro" id="IPR020845">
    <property type="entry name" value="AMP-binding_CS"/>
</dbReference>
<dbReference type="InterPro" id="IPR000873">
    <property type="entry name" value="AMP-dep_synth/lig_dom"/>
</dbReference>
<dbReference type="InterPro" id="IPR042099">
    <property type="entry name" value="ANL_N_sf"/>
</dbReference>
<dbReference type="NCBIfam" id="TIGR02188">
    <property type="entry name" value="Ac_CoA_lig_AcsA"/>
    <property type="match status" value="1"/>
</dbReference>
<dbReference type="NCBIfam" id="NF001208">
    <property type="entry name" value="PRK00174.1"/>
    <property type="match status" value="1"/>
</dbReference>
<dbReference type="PANTHER" id="PTHR24095">
    <property type="entry name" value="ACETYL-COENZYME A SYNTHETASE"/>
    <property type="match status" value="1"/>
</dbReference>
<dbReference type="PANTHER" id="PTHR24095:SF243">
    <property type="entry name" value="ACETYL-COENZYME A SYNTHETASE"/>
    <property type="match status" value="1"/>
</dbReference>
<dbReference type="Pfam" id="PF16177">
    <property type="entry name" value="ACAS_N"/>
    <property type="match status" value="1"/>
</dbReference>
<dbReference type="Pfam" id="PF00501">
    <property type="entry name" value="AMP-binding"/>
    <property type="match status" value="1"/>
</dbReference>
<dbReference type="Pfam" id="PF13193">
    <property type="entry name" value="AMP-binding_C"/>
    <property type="match status" value="1"/>
</dbReference>
<dbReference type="SUPFAM" id="SSF56801">
    <property type="entry name" value="Acetyl-CoA synthetase-like"/>
    <property type="match status" value="1"/>
</dbReference>
<dbReference type="PROSITE" id="PS00455">
    <property type="entry name" value="AMP_BINDING"/>
    <property type="match status" value="1"/>
</dbReference>
<proteinExistence type="inferred from homology"/>
<comment type="function">
    <text evidence="1">Catalyzes the conversion of acetate into acetyl-CoA (AcCoA), an essential intermediate at the junction of anabolic and catabolic pathways. AcsA undergoes a two-step reaction. In the first half reaction, AcsA combines acetate with ATP to form acetyl-adenylate (AcAMP) intermediate. In the second half reaction, it can then transfer the acetyl group from AcAMP to the sulfhydryl group of CoA, forming the product AcCoA.</text>
</comment>
<comment type="catalytic activity">
    <reaction evidence="1">
        <text>acetate + ATP + CoA = acetyl-CoA + AMP + diphosphate</text>
        <dbReference type="Rhea" id="RHEA:23176"/>
        <dbReference type="ChEBI" id="CHEBI:30089"/>
        <dbReference type="ChEBI" id="CHEBI:30616"/>
        <dbReference type="ChEBI" id="CHEBI:33019"/>
        <dbReference type="ChEBI" id="CHEBI:57287"/>
        <dbReference type="ChEBI" id="CHEBI:57288"/>
        <dbReference type="ChEBI" id="CHEBI:456215"/>
        <dbReference type="EC" id="6.2.1.1"/>
    </reaction>
</comment>
<comment type="cofactor">
    <cofactor evidence="1">
        <name>Mg(2+)</name>
        <dbReference type="ChEBI" id="CHEBI:18420"/>
    </cofactor>
</comment>
<comment type="PTM">
    <text evidence="1">Acetylated. Deacetylation by the SIR2-homolog deacetylase activates the enzyme.</text>
</comment>
<comment type="similarity">
    <text evidence="1">Belongs to the ATP-dependent AMP-binding enzyme family.</text>
</comment>
<reference key="1">
    <citation type="journal article" date="2005" name="Proc. Natl. Acad. Sci. U.S.A.">
        <title>Comparison of the complete genome sequences of Pseudomonas syringae pv. syringae B728a and pv. tomato DC3000.</title>
        <authorList>
            <person name="Feil H."/>
            <person name="Feil W.S."/>
            <person name="Chain P."/>
            <person name="Larimer F."/>
            <person name="Dibartolo G."/>
            <person name="Copeland A."/>
            <person name="Lykidis A."/>
            <person name="Trong S."/>
            <person name="Nolan M."/>
            <person name="Goltsman E."/>
            <person name="Thiel J."/>
            <person name="Malfatti S."/>
            <person name="Loper J.E."/>
            <person name="Lapidus A."/>
            <person name="Detter J.C."/>
            <person name="Land M."/>
            <person name="Richardson P.M."/>
            <person name="Kyrpides N.C."/>
            <person name="Ivanova N."/>
            <person name="Lindow S.E."/>
        </authorList>
    </citation>
    <scope>NUCLEOTIDE SEQUENCE [LARGE SCALE GENOMIC DNA]</scope>
    <source>
        <strain>B728a</strain>
    </source>
</reference>
<accession>Q4ZQG8</accession>
<name>ACSA_PSEU2</name>